<organism>
    <name type="scientific">Shigella flexneri</name>
    <dbReference type="NCBI Taxonomy" id="623"/>
    <lineage>
        <taxon>Bacteria</taxon>
        <taxon>Pseudomonadati</taxon>
        <taxon>Pseudomonadota</taxon>
        <taxon>Gammaproteobacteria</taxon>
        <taxon>Enterobacterales</taxon>
        <taxon>Enterobacteriaceae</taxon>
        <taxon>Shigella</taxon>
    </lineage>
</organism>
<dbReference type="EC" id="2.3.1.251" evidence="1"/>
<dbReference type="EMBL" id="AE005674">
    <property type="protein sequence ID" value="AAN42294.1"/>
    <property type="molecule type" value="Genomic_DNA"/>
</dbReference>
<dbReference type="EMBL" id="AE014073">
    <property type="protein sequence ID" value="AAP16165.1"/>
    <property type="molecule type" value="Genomic_DNA"/>
</dbReference>
<dbReference type="RefSeq" id="NP_706587.1">
    <property type="nucleotide sequence ID" value="NC_004337.2"/>
</dbReference>
<dbReference type="RefSeq" id="WP_005049488.1">
    <property type="nucleotide sequence ID" value="NZ_WPGV01000003.1"/>
</dbReference>
<dbReference type="SMR" id="Q83LW9"/>
<dbReference type="STRING" id="198214.SF0658"/>
<dbReference type="PaxDb" id="198214-SF0658"/>
<dbReference type="GeneID" id="1023639"/>
<dbReference type="KEGG" id="sfl:SF0658"/>
<dbReference type="KEGG" id="sfx:S0681"/>
<dbReference type="PATRIC" id="fig|198214.7.peg.765"/>
<dbReference type="HOGENOM" id="CLU_104099_0_0_6"/>
<dbReference type="Proteomes" id="UP000001006">
    <property type="component" value="Chromosome"/>
</dbReference>
<dbReference type="Proteomes" id="UP000002673">
    <property type="component" value="Chromosome"/>
</dbReference>
<dbReference type="GO" id="GO:0009279">
    <property type="term" value="C:cell outer membrane"/>
    <property type="evidence" value="ECO:0007669"/>
    <property type="project" value="UniProtKB-SubCell"/>
</dbReference>
<dbReference type="GO" id="GO:0016746">
    <property type="term" value="F:acyltransferase activity"/>
    <property type="evidence" value="ECO:0007669"/>
    <property type="project" value="UniProtKB-UniRule"/>
</dbReference>
<dbReference type="GO" id="GO:0009245">
    <property type="term" value="P:lipid A biosynthetic process"/>
    <property type="evidence" value="ECO:0007669"/>
    <property type="project" value="UniProtKB-UniRule"/>
</dbReference>
<dbReference type="FunFam" id="2.40.160.20:FF:000002">
    <property type="entry name" value="Lipid A palmitoyltransferase PagP"/>
    <property type="match status" value="1"/>
</dbReference>
<dbReference type="Gene3D" id="2.40.160.20">
    <property type="match status" value="1"/>
</dbReference>
<dbReference type="HAMAP" id="MF_00837">
    <property type="entry name" value="PagP_transferase"/>
    <property type="match status" value="1"/>
</dbReference>
<dbReference type="InterPro" id="IPR009746">
    <property type="entry name" value="LipidA_acyl_PagP"/>
</dbReference>
<dbReference type="InterPro" id="IPR011250">
    <property type="entry name" value="OMP/PagP_b-brl"/>
</dbReference>
<dbReference type="NCBIfam" id="NF008271">
    <property type="entry name" value="PRK11045.1"/>
    <property type="match status" value="1"/>
</dbReference>
<dbReference type="Pfam" id="PF07017">
    <property type="entry name" value="PagP"/>
    <property type="match status" value="1"/>
</dbReference>
<dbReference type="SUPFAM" id="SSF56925">
    <property type="entry name" value="OMPA-like"/>
    <property type="match status" value="1"/>
</dbReference>
<feature type="signal peptide" evidence="1">
    <location>
        <begin position="1"/>
        <end position="25"/>
    </location>
</feature>
<feature type="chain" id="PRO_0000414475" description="Lipid A acyltransferase PagP">
    <location>
        <begin position="26"/>
        <end position="186"/>
    </location>
</feature>
<feature type="active site" evidence="1">
    <location>
        <position position="58"/>
    </location>
</feature>
<feature type="active site" evidence="1">
    <location>
        <position position="101"/>
    </location>
</feature>
<feature type="active site" evidence="1">
    <location>
        <position position="102"/>
    </location>
</feature>
<feature type="site" description="Role in lipopolysaccharide recognition" evidence="1">
    <location>
        <position position="67"/>
    </location>
</feature>
<feature type="site" description="Role in the phospholipid gating" evidence="1">
    <location>
        <position position="172"/>
    </location>
</feature>
<name>PAGP_SHIFL</name>
<reference key="1">
    <citation type="journal article" date="2002" name="Nucleic Acids Res.">
        <title>Genome sequence of Shigella flexneri 2a: insights into pathogenicity through comparison with genomes of Escherichia coli K12 and O157.</title>
        <authorList>
            <person name="Jin Q."/>
            <person name="Yuan Z."/>
            <person name="Xu J."/>
            <person name="Wang Y."/>
            <person name="Shen Y."/>
            <person name="Lu W."/>
            <person name="Wang J."/>
            <person name="Liu H."/>
            <person name="Yang J."/>
            <person name="Yang F."/>
            <person name="Zhang X."/>
            <person name="Zhang J."/>
            <person name="Yang G."/>
            <person name="Wu H."/>
            <person name="Qu D."/>
            <person name="Dong J."/>
            <person name="Sun L."/>
            <person name="Xue Y."/>
            <person name="Zhao A."/>
            <person name="Gao Y."/>
            <person name="Zhu J."/>
            <person name="Kan B."/>
            <person name="Ding K."/>
            <person name="Chen S."/>
            <person name="Cheng H."/>
            <person name="Yao Z."/>
            <person name="He B."/>
            <person name="Chen R."/>
            <person name="Ma D."/>
            <person name="Qiang B."/>
            <person name="Wen Y."/>
            <person name="Hou Y."/>
            <person name="Yu J."/>
        </authorList>
    </citation>
    <scope>NUCLEOTIDE SEQUENCE [LARGE SCALE GENOMIC DNA]</scope>
    <source>
        <strain>301 / Serotype 2a</strain>
    </source>
</reference>
<reference key="2">
    <citation type="journal article" date="2003" name="Infect. Immun.">
        <title>Complete genome sequence and comparative genomics of Shigella flexneri serotype 2a strain 2457T.</title>
        <authorList>
            <person name="Wei J."/>
            <person name="Goldberg M.B."/>
            <person name="Burland V."/>
            <person name="Venkatesan M.M."/>
            <person name="Deng W."/>
            <person name="Fournier G."/>
            <person name="Mayhew G.F."/>
            <person name="Plunkett G. III"/>
            <person name="Rose D.J."/>
            <person name="Darling A."/>
            <person name="Mau B."/>
            <person name="Perna N.T."/>
            <person name="Payne S.M."/>
            <person name="Runyen-Janecky L.J."/>
            <person name="Zhou S."/>
            <person name="Schwartz D.C."/>
            <person name="Blattner F.R."/>
        </authorList>
    </citation>
    <scope>NUCLEOTIDE SEQUENCE [LARGE SCALE GENOMIC DNA]</scope>
    <source>
        <strain>ATCC 700930 / 2457T / Serotype 2a</strain>
    </source>
</reference>
<gene>
    <name evidence="1" type="primary">pagP</name>
    <name type="synonym">crcA</name>
    <name type="ordered locus">SF0658</name>
    <name type="ordered locus">S0681</name>
</gene>
<evidence type="ECO:0000255" key="1">
    <source>
        <dbReference type="HAMAP-Rule" id="MF_00837"/>
    </source>
</evidence>
<protein>
    <recommendedName>
        <fullName evidence="1">Lipid A acyltransferase PagP</fullName>
        <ecNumber evidence="1">2.3.1.251</ecNumber>
    </recommendedName>
    <alternativeName>
        <fullName evidence="1">Lipid A acylation protein</fullName>
    </alternativeName>
</protein>
<comment type="function">
    <text evidence="1">Transfers a fatty acid residue from the sn-1 position of a phospholipid to the N-linked hydroxyfatty acid chain on the proximal unit of lipid A or its precursors.</text>
</comment>
<comment type="catalytic activity">
    <reaction evidence="1">
        <text>a lipid A + a 1,2-diacyl-sn-glycero-3-phosphocholine = a hepta-acyl lipid A + a 2-acyl-sn-glycero-3-phosphocholine</text>
        <dbReference type="Rhea" id="RHEA:74275"/>
        <dbReference type="ChEBI" id="CHEBI:57643"/>
        <dbReference type="ChEBI" id="CHEBI:57875"/>
        <dbReference type="ChEBI" id="CHEBI:193141"/>
        <dbReference type="ChEBI" id="CHEBI:193142"/>
        <dbReference type="EC" id="2.3.1.251"/>
    </reaction>
</comment>
<comment type="catalytic activity">
    <reaction evidence="1">
        <text>a lipid IVA + a 1,2-diacyl-sn-glycero-3-phosphocholine = a lipid IVB + a 2-acyl-sn-glycero-3-phosphocholine</text>
        <dbReference type="Rhea" id="RHEA:74279"/>
        <dbReference type="ChEBI" id="CHEBI:57643"/>
        <dbReference type="ChEBI" id="CHEBI:57875"/>
        <dbReference type="ChEBI" id="CHEBI:176425"/>
        <dbReference type="ChEBI" id="CHEBI:193143"/>
        <dbReference type="EC" id="2.3.1.251"/>
    </reaction>
</comment>
<comment type="catalytic activity">
    <reaction evidence="1">
        <text>a lipid IIA + a 1,2-diacyl-sn-glycero-3-phosphocholine = a lipid IIB + a 2-acyl-sn-glycero-3-phosphocholine</text>
        <dbReference type="Rhea" id="RHEA:74283"/>
        <dbReference type="ChEBI" id="CHEBI:57643"/>
        <dbReference type="ChEBI" id="CHEBI:57875"/>
        <dbReference type="ChEBI" id="CHEBI:193144"/>
        <dbReference type="ChEBI" id="CHEBI:193145"/>
        <dbReference type="EC" id="2.3.1.251"/>
    </reaction>
</comment>
<comment type="subunit">
    <text evidence="1">Homodimer.</text>
</comment>
<comment type="subcellular location">
    <subcellularLocation>
        <location evidence="1">Cell outer membrane</location>
    </subcellularLocation>
</comment>
<comment type="similarity">
    <text evidence="1">Belongs to the lipid A palmitoyltransferase family.</text>
</comment>
<proteinExistence type="inferred from homology"/>
<accession>Q83LW9</accession>
<accession>Q7C2L2</accession>
<sequence>MNVSKYVAIFSFVFIQLISVGKVFANADERMTTFRENIAQTWQQPEHYDLYIPAITWHARFAYDKEKTDRYNERPWGGGFGLSRWDEKGNWHGLYAMAFKDSWNKWEPIAGYGWESTWRPLADENFHLGLGFTAGVTARDNWNYIPLPVLLPLASVGYGPVTFQMTYIPGTYNNGNVYFAWMRFQF</sequence>
<keyword id="KW-0012">Acyltransferase</keyword>
<keyword id="KW-0998">Cell outer membrane</keyword>
<keyword id="KW-0472">Membrane</keyword>
<keyword id="KW-1185">Reference proteome</keyword>
<keyword id="KW-0732">Signal</keyword>
<keyword id="KW-0808">Transferase</keyword>